<keyword id="KW-0002">3D-structure</keyword>
<keyword id="KW-0158">Chromosome</keyword>
<keyword id="KW-0539">Nucleus</keyword>
<keyword id="KW-1185">Reference proteome</keyword>
<keyword id="KW-0779">Telomere</keyword>
<feature type="chain" id="PRO_0000312638" description="Protein ten1">
    <location>
        <begin position="1"/>
        <end position="102"/>
    </location>
</feature>
<feature type="helix" evidence="2">
    <location>
        <begin position="9"/>
        <end position="14"/>
    </location>
</feature>
<feature type="strand" evidence="2">
    <location>
        <begin position="20"/>
        <end position="31"/>
    </location>
</feature>
<feature type="strand" evidence="2">
    <location>
        <begin position="34"/>
        <end position="39"/>
    </location>
</feature>
<feature type="strand" evidence="2">
    <location>
        <begin position="42"/>
        <end position="47"/>
    </location>
</feature>
<feature type="strand" evidence="2">
    <location>
        <begin position="62"/>
        <end position="71"/>
    </location>
</feature>
<feature type="strand" evidence="2">
    <location>
        <begin position="74"/>
        <end position="82"/>
    </location>
</feature>
<feature type="helix" evidence="2">
    <location>
        <begin position="88"/>
        <end position="100"/>
    </location>
</feature>
<reference key="1">
    <citation type="journal article" date="2002" name="Nature">
        <title>The genome sequence of Schizosaccharomyces pombe.</title>
        <authorList>
            <person name="Wood V."/>
            <person name="Gwilliam R."/>
            <person name="Rajandream M.A."/>
            <person name="Lyne M.H."/>
            <person name="Lyne R."/>
            <person name="Stewart A."/>
            <person name="Sgouros J.G."/>
            <person name="Peat N."/>
            <person name="Hayles J."/>
            <person name="Baker S.G."/>
            <person name="Basham D."/>
            <person name="Bowman S."/>
            <person name="Brooks K."/>
            <person name="Brown D."/>
            <person name="Brown S."/>
            <person name="Chillingworth T."/>
            <person name="Churcher C.M."/>
            <person name="Collins M."/>
            <person name="Connor R."/>
            <person name="Cronin A."/>
            <person name="Davis P."/>
            <person name="Feltwell T."/>
            <person name="Fraser A."/>
            <person name="Gentles S."/>
            <person name="Goble A."/>
            <person name="Hamlin N."/>
            <person name="Harris D.E."/>
            <person name="Hidalgo J."/>
            <person name="Hodgson G."/>
            <person name="Holroyd S."/>
            <person name="Hornsby T."/>
            <person name="Howarth S."/>
            <person name="Huckle E.J."/>
            <person name="Hunt S."/>
            <person name="Jagels K."/>
            <person name="James K.D."/>
            <person name="Jones L."/>
            <person name="Jones M."/>
            <person name="Leather S."/>
            <person name="McDonald S."/>
            <person name="McLean J."/>
            <person name="Mooney P."/>
            <person name="Moule S."/>
            <person name="Mungall K.L."/>
            <person name="Murphy L.D."/>
            <person name="Niblett D."/>
            <person name="Odell C."/>
            <person name="Oliver K."/>
            <person name="O'Neil S."/>
            <person name="Pearson D."/>
            <person name="Quail M.A."/>
            <person name="Rabbinowitsch E."/>
            <person name="Rutherford K.M."/>
            <person name="Rutter S."/>
            <person name="Saunders D."/>
            <person name="Seeger K."/>
            <person name="Sharp S."/>
            <person name="Skelton J."/>
            <person name="Simmonds M.N."/>
            <person name="Squares R."/>
            <person name="Squares S."/>
            <person name="Stevens K."/>
            <person name="Taylor K."/>
            <person name="Taylor R.G."/>
            <person name="Tivey A."/>
            <person name="Walsh S.V."/>
            <person name="Warren T."/>
            <person name="Whitehead S."/>
            <person name="Woodward J.R."/>
            <person name="Volckaert G."/>
            <person name="Aert R."/>
            <person name="Robben J."/>
            <person name="Grymonprez B."/>
            <person name="Weltjens I."/>
            <person name="Vanstreels E."/>
            <person name="Rieger M."/>
            <person name="Schaefer M."/>
            <person name="Mueller-Auer S."/>
            <person name="Gabel C."/>
            <person name="Fuchs M."/>
            <person name="Duesterhoeft A."/>
            <person name="Fritzc C."/>
            <person name="Holzer E."/>
            <person name="Moestl D."/>
            <person name="Hilbert H."/>
            <person name="Borzym K."/>
            <person name="Langer I."/>
            <person name="Beck A."/>
            <person name="Lehrach H."/>
            <person name="Reinhardt R."/>
            <person name="Pohl T.M."/>
            <person name="Eger P."/>
            <person name="Zimmermann W."/>
            <person name="Wedler H."/>
            <person name="Wambutt R."/>
            <person name="Purnelle B."/>
            <person name="Goffeau A."/>
            <person name="Cadieu E."/>
            <person name="Dreano S."/>
            <person name="Gloux S."/>
            <person name="Lelaure V."/>
            <person name="Mottier S."/>
            <person name="Galibert F."/>
            <person name="Aves S.J."/>
            <person name="Xiang Z."/>
            <person name="Hunt C."/>
            <person name="Moore K."/>
            <person name="Hurst S.M."/>
            <person name="Lucas M."/>
            <person name="Rochet M."/>
            <person name="Gaillardin C."/>
            <person name="Tallada V.A."/>
            <person name="Garzon A."/>
            <person name="Thode G."/>
            <person name="Daga R.R."/>
            <person name="Cruzado L."/>
            <person name="Jimenez J."/>
            <person name="Sanchez M."/>
            <person name="del Rey F."/>
            <person name="Benito J."/>
            <person name="Dominguez A."/>
            <person name="Revuelta J.L."/>
            <person name="Moreno S."/>
            <person name="Armstrong J."/>
            <person name="Forsburg S.L."/>
            <person name="Cerutti L."/>
            <person name="Lowe T."/>
            <person name="McCombie W.R."/>
            <person name="Paulsen I."/>
            <person name="Potashkin J."/>
            <person name="Shpakovski G.V."/>
            <person name="Ussery D."/>
            <person name="Barrell B.G."/>
            <person name="Nurse P."/>
        </authorList>
    </citation>
    <scope>NUCLEOTIDE SEQUENCE [LARGE SCALE GENOMIC DNA]</scope>
    <source>
        <strain>972 / ATCC 24843</strain>
    </source>
</reference>
<reference key="2">
    <citation type="journal article" date="2007" name="Proc. Natl. Acad. Sci. U.S.A.">
        <title>Protection of telomeres by a conserved Stn1-Ten1 complex.</title>
        <authorList>
            <person name="Martin V."/>
            <person name="Du L.-L."/>
            <person name="Rozenzhak S."/>
            <person name="Russell P."/>
        </authorList>
    </citation>
    <scope>FUNCTION</scope>
    <scope>INTERACTION WITH STN1</scope>
    <scope>SUBCELLULAR LOCATION</scope>
</reference>
<gene>
    <name type="primary">ten1</name>
    <name type="ORF">SPCC1393.14</name>
</gene>
<evidence type="ECO:0000269" key="1">
    <source>
    </source>
</evidence>
<evidence type="ECO:0007829" key="2">
    <source>
        <dbReference type="PDB" id="3KF6"/>
    </source>
</evidence>
<protein>
    <recommendedName>
        <fullName>Protein ten1</fullName>
    </recommendedName>
</protein>
<comment type="function">
    <text evidence="1">Required for telomere maintenance.</text>
</comment>
<comment type="subunit">
    <text evidence="1">Interacts with stn1.</text>
</comment>
<comment type="subcellular location">
    <subcellularLocation>
        <location evidence="1">Nucleus</location>
    </subcellularLocation>
    <subcellularLocation>
        <location evidence="1">Chromosome</location>
        <location evidence="1">Telomere</location>
    </subcellularLocation>
</comment>
<proteinExistence type="evidence at protein level"/>
<organism>
    <name type="scientific">Schizosaccharomyces pombe (strain 972 / ATCC 24843)</name>
    <name type="common">Fission yeast</name>
    <dbReference type="NCBI Taxonomy" id="284812"/>
    <lineage>
        <taxon>Eukaryota</taxon>
        <taxon>Fungi</taxon>
        <taxon>Dikarya</taxon>
        <taxon>Ascomycota</taxon>
        <taxon>Taphrinomycotina</taxon>
        <taxon>Schizosaccharomycetes</taxon>
        <taxon>Schizosaccharomycetales</taxon>
        <taxon>Schizosaccharomycetaceae</taxon>
        <taxon>Schizosaccharomyces</taxon>
    </lineage>
</organism>
<name>TEN1_SCHPO</name>
<dbReference type="EMBL" id="CU329672">
    <property type="protein sequence ID" value="CBA11518.1"/>
    <property type="molecule type" value="Genomic_DNA"/>
</dbReference>
<dbReference type="RefSeq" id="XP_002788950.1">
    <property type="nucleotide sequence ID" value="XM_002788904.1"/>
</dbReference>
<dbReference type="PDB" id="3K0X">
    <property type="method" value="X-ray"/>
    <property type="resolution" value="1.70 A"/>
    <property type="chains" value="A=1-102"/>
</dbReference>
<dbReference type="PDB" id="3KF6">
    <property type="method" value="X-ray"/>
    <property type="resolution" value="1.65 A"/>
    <property type="chains" value="B=2-102"/>
</dbReference>
<dbReference type="PDBsum" id="3K0X"/>
<dbReference type="PDBsum" id="3KF6"/>
<dbReference type="SMR" id="P0C5Y7"/>
<dbReference type="BioGRID" id="1028289">
    <property type="interactions" value="6"/>
</dbReference>
<dbReference type="ComplexPortal" id="CPX-25746">
    <property type="entry name" value="CST complex"/>
</dbReference>
<dbReference type="FunCoup" id="P0C5Y7">
    <property type="interactions" value="3"/>
</dbReference>
<dbReference type="IntAct" id="P0C5Y7">
    <property type="interactions" value="3"/>
</dbReference>
<dbReference type="MINT" id="P0C5Y7"/>
<dbReference type="STRING" id="284812.P0C5Y7"/>
<dbReference type="PaxDb" id="4896-SPCC1393.14.1"/>
<dbReference type="EnsemblFungi" id="SPCC1393.14.1">
    <property type="protein sequence ID" value="SPCC1393.14.1:pep"/>
    <property type="gene ID" value="SPCC1393.14"/>
</dbReference>
<dbReference type="PomBase" id="SPCC1393.14">
    <property type="gene designation" value="ten1"/>
</dbReference>
<dbReference type="VEuPathDB" id="FungiDB:SPCC1393.14"/>
<dbReference type="HOGENOM" id="CLU_2198510_0_0_1"/>
<dbReference type="InParanoid" id="P0C5Y7"/>
<dbReference type="OMA" id="HEWLNIV"/>
<dbReference type="EvolutionaryTrace" id="P0C5Y7"/>
<dbReference type="PRO" id="PR:P0C5Y7"/>
<dbReference type="Proteomes" id="UP000002485">
    <property type="component" value="Chromosome III"/>
</dbReference>
<dbReference type="GO" id="GO:0140445">
    <property type="term" value="C:chromosome, telomeric repeat region"/>
    <property type="evidence" value="ECO:0000314"/>
    <property type="project" value="PomBase"/>
</dbReference>
<dbReference type="GO" id="GO:1990879">
    <property type="term" value="C:CST complex"/>
    <property type="evidence" value="ECO:0000353"/>
    <property type="project" value="PomBase"/>
</dbReference>
<dbReference type="GO" id="GO:0000782">
    <property type="term" value="C:telomere cap complex"/>
    <property type="evidence" value="ECO:0000314"/>
    <property type="project" value="PomBase"/>
</dbReference>
<dbReference type="GO" id="GO:0043047">
    <property type="term" value="F:single-stranded telomeric DNA binding"/>
    <property type="evidence" value="ECO:0007669"/>
    <property type="project" value="InterPro"/>
</dbReference>
<dbReference type="GO" id="GO:0016233">
    <property type="term" value="P:telomere capping"/>
    <property type="evidence" value="ECO:0000315"/>
    <property type="project" value="PomBase"/>
</dbReference>
<dbReference type="Gene3D" id="2.40.50.140">
    <property type="entry name" value="Nucleic acid-binding proteins"/>
    <property type="match status" value="1"/>
</dbReference>
<dbReference type="InterPro" id="IPR012340">
    <property type="entry name" value="NA-bd_OB-fold"/>
</dbReference>
<dbReference type="InterPro" id="IPR024222">
    <property type="entry name" value="Ten1_fungal"/>
</dbReference>
<dbReference type="Pfam" id="PF12658">
    <property type="entry name" value="Ten1"/>
    <property type="match status" value="1"/>
</dbReference>
<accession>P0C5Y7</accession>
<accession>C6Y4D1</accession>
<sequence length="102" mass="11533">MDSAKLIFINQINDCKDGQKLRFLGCVQSYKNGILRLIDGSSSVTCDVTVVLPDVSIQKHEWLNIVGRKRQDGIVDVLLIRSAVGINLPRYRQMVSERQKCD</sequence>